<name>NRDI_YERPB</name>
<evidence type="ECO:0000255" key="1">
    <source>
        <dbReference type="HAMAP-Rule" id="MF_00128"/>
    </source>
</evidence>
<protein>
    <recommendedName>
        <fullName evidence="1">Protein NrdI</fullName>
    </recommendedName>
</protein>
<dbReference type="EMBL" id="CP001048">
    <property type="protein sequence ID" value="ACC90030.1"/>
    <property type="molecule type" value="Genomic_DNA"/>
</dbReference>
<dbReference type="RefSeq" id="WP_002215935.1">
    <property type="nucleotide sequence ID" value="NZ_CP009780.1"/>
</dbReference>
<dbReference type="SMR" id="B2KAB9"/>
<dbReference type="GeneID" id="57976042"/>
<dbReference type="KEGG" id="ypb:YPTS_3073"/>
<dbReference type="PATRIC" id="fig|502801.10.peg.2507"/>
<dbReference type="GO" id="GO:0010181">
    <property type="term" value="F:FMN binding"/>
    <property type="evidence" value="ECO:0007669"/>
    <property type="project" value="InterPro"/>
</dbReference>
<dbReference type="GO" id="GO:0036211">
    <property type="term" value="P:protein modification process"/>
    <property type="evidence" value="ECO:0007669"/>
    <property type="project" value="InterPro"/>
</dbReference>
<dbReference type="FunFam" id="3.40.50.360:FF:000005">
    <property type="entry name" value="Protein NrdI"/>
    <property type="match status" value="1"/>
</dbReference>
<dbReference type="Gene3D" id="3.40.50.360">
    <property type="match status" value="1"/>
</dbReference>
<dbReference type="HAMAP" id="MF_00128">
    <property type="entry name" value="NrdI"/>
    <property type="match status" value="1"/>
</dbReference>
<dbReference type="InterPro" id="IPR029039">
    <property type="entry name" value="Flavoprotein-like_sf"/>
</dbReference>
<dbReference type="InterPro" id="IPR020852">
    <property type="entry name" value="RNR_Ib_NrdI_bac"/>
</dbReference>
<dbReference type="InterPro" id="IPR004465">
    <property type="entry name" value="RNR_NrdI"/>
</dbReference>
<dbReference type="NCBIfam" id="TIGR00333">
    <property type="entry name" value="nrdI"/>
    <property type="match status" value="1"/>
</dbReference>
<dbReference type="PANTHER" id="PTHR37297">
    <property type="entry name" value="PROTEIN NRDI"/>
    <property type="match status" value="1"/>
</dbReference>
<dbReference type="PANTHER" id="PTHR37297:SF1">
    <property type="entry name" value="PROTEIN NRDI"/>
    <property type="match status" value="1"/>
</dbReference>
<dbReference type="Pfam" id="PF07972">
    <property type="entry name" value="Flavodoxin_NdrI"/>
    <property type="match status" value="1"/>
</dbReference>
<dbReference type="PIRSF" id="PIRSF005087">
    <property type="entry name" value="NrdI"/>
    <property type="match status" value="1"/>
</dbReference>
<dbReference type="SUPFAM" id="SSF52218">
    <property type="entry name" value="Flavoproteins"/>
    <property type="match status" value="1"/>
</dbReference>
<proteinExistence type="inferred from homology"/>
<organism>
    <name type="scientific">Yersinia pseudotuberculosis serotype IB (strain PB1/+)</name>
    <dbReference type="NCBI Taxonomy" id="502801"/>
    <lineage>
        <taxon>Bacteria</taxon>
        <taxon>Pseudomonadati</taxon>
        <taxon>Pseudomonadota</taxon>
        <taxon>Gammaproteobacteria</taxon>
        <taxon>Enterobacterales</taxon>
        <taxon>Yersiniaceae</taxon>
        <taxon>Yersinia</taxon>
    </lineage>
</organism>
<sequence length="134" mass="14916">MNPLVYFSSSSENSHRFVEKLQLPAIRIPIAGAREKLRVEQPYILLVPSYGGGSPVGAVPIQVIRFLNDVHNRSLIRGVIAAGNTNFGDAYCLAGDIISHKCQVPYLYRFELLGTAEDVANVRKGVTEFWQRQN</sequence>
<feature type="chain" id="PRO_1000095637" description="Protein NrdI">
    <location>
        <begin position="1"/>
        <end position="134"/>
    </location>
</feature>
<gene>
    <name evidence="1" type="primary">nrdI</name>
    <name type="ordered locus">YPTS_3073</name>
</gene>
<accession>B2KAB9</accession>
<reference key="1">
    <citation type="submission" date="2008-04" db="EMBL/GenBank/DDBJ databases">
        <title>Complete sequence of Yersinia pseudotuberculosis PB1/+.</title>
        <authorList>
            <person name="Copeland A."/>
            <person name="Lucas S."/>
            <person name="Lapidus A."/>
            <person name="Glavina del Rio T."/>
            <person name="Dalin E."/>
            <person name="Tice H."/>
            <person name="Bruce D."/>
            <person name="Goodwin L."/>
            <person name="Pitluck S."/>
            <person name="Munk A.C."/>
            <person name="Brettin T."/>
            <person name="Detter J.C."/>
            <person name="Han C."/>
            <person name="Tapia R."/>
            <person name="Schmutz J."/>
            <person name="Larimer F."/>
            <person name="Land M."/>
            <person name="Hauser L."/>
            <person name="Challacombe J.F."/>
            <person name="Green L."/>
            <person name="Lindler L.E."/>
            <person name="Nikolich M.P."/>
            <person name="Richardson P."/>
        </authorList>
    </citation>
    <scope>NUCLEOTIDE SEQUENCE [LARGE SCALE GENOMIC DNA]</scope>
    <source>
        <strain>PB1/+</strain>
    </source>
</reference>
<comment type="function">
    <text evidence="1">Probably involved in ribonucleotide reductase function.</text>
</comment>
<comment type="similarity">
    <text evidence="1">Belongs to the NrdI family.</text>
</comment>